<proteinExistence type="evidence at protein level"/>
<keyword id="KW-0028">Amino-acid biosynthesis</keyword>
<keyword id="KW-0457">Lysine biosynthesis</keyword>
<keyword id="KW-0460">Magnesium</keyword>
<keyword id="KW-0464">Manganese</keyword>
<keyword id="KW-0479">Metal-binding</keyword>
<keyword id="KW-0496">Mitochondrion</keyword>
<keyword id="KW-0597">Phosphoprotein</keyword>
<keyword id="KW-1185">Reference proteome</keyword>
<keyword id="KW-0808">Transferase</keyword>
<keyword id="KW-0809">Transit peptide</keyword>
<gene>
    <name type="primary">LYS21</name>
    <name type="ordered locus">YDL131W</name>
    <name type="ORF">D2195</name>
</gene>
<reference key="1">
    <citation type="journal article" date="1996" name="Yeast">
        <title>Analysis of a 26,756 bp segment from the left arm of yeast chromosome IV.</title>
        <authorList>
            <person name="Woelfl S."/>
            <person name="Haneman V."/>
            <person name="Saluz H.P."/>
        </authorList>
    </citation>
    <scope>NUCLEOTIDE SEQUENCE [GENOMIC DNA]</scope>
    <source>
        <strain>ATCC 96604 / S288c / FY1679</strain>
    </source>
</reference>
<reference key="2">
    <citation type="journal article" date="1997" name="Nature">
        <title>The nucleotide sequence of Saccharomyces cerevisiae chromosome IV.</title>
        <authorList>
            <person name="Jacq C."/>
            <person name="Alt-Moerbe J."/>
            <person name="Andre B."/>
            <person name="Arnold W."/>
            <person name="Bahr A."/>
            <person name="Ballesta J.P.G."/>
            <person name="Bargues M."/>
            <person name="Baron L."/>
            <person name="Becker A."/>
            <person name="Biteau N."/>
            <person name="Bloecker H."/>
            <person name="Blugeon C."/>
            <person name="Boskovic J."/>
            <person name="Brandt P."/>
            <person name="Brueckner M."/>
            <person name="Buitrago M.J."/>
            <person name="Coster F."/>
            <person name="Delaveau T."/>
            <person name="del Rey F."/>
            <person name="Dujon B."/>
            <person name="Eide L.G."/>
            <person name="Garcia-Cantalejo J.M."/>
            <person name="Goffeau A."/>
            <person name="Gomez-Peris A."/>
            <person name="Granotier C."/>
            <person name="Hanemann V."/>
            <person name="Hankeln T."/>
            <person name="Hoheisel J.D."/>
            <person name="Jaeger W."/>
            <person name="Jimenez A."/>
            <person name="Jonniaux J.-L."/>
            <person name="Kraemer C."/>
            <person name="Kuester H."/>
            <person name="Laamanen P."/>
            <person name="Legros Y."/>
            <person name="Louis E.J."/>
            <person name="Moeller-Rieker S."/>
            <person name="Monnet A."/>
            <person name="Moro M."/>
            <person name="Mueller-Auer S."/>
            <person name="Nussbaumer B."/>
            <person name="Paricio N."/>
            <person name="Paulin L."/>
            <person name="Perea J."/>
            <person name="Perez-Alonso M."/>
            <person name="Perez-Ortin J.E."/>
            <person name="Pohl T.M."/>
            <person name="Prydz H."/>
            <person name="Purnelle B."/>
            <person name="Rasmussen S.W."/>
            <person name="Remacha M.A."/>
            <person name="Revuelta J.L."/>
            <person name="Rieger M."/>
            <person name="Salom D."/>
            <person name="Saluz H.P."/>
            <person name="Saiz J.E."/>
            <person name="Saren A.-M."/>
            <person name="Schaefer M."/>
            <person name="Scharfe M."/>
            <person name="Schmidt E.R."/>
            <person name="Schneider C."/>
            <person name="Scholler P."/>
            <person name="Schwarz S."/>
            <person name="Soler-Mira A."/>
            <person name="Urrestarazu L.A."/>
            <person name="Verhasselt P."/>
            <person name="Vissers S."/>
            <person name="Voet M."/>
            <person name="Volckaert G."/>
            <person name="Wagner G."/>
            <person name="Wambutt R."/>
            <person name="Wedler E."/>
            <person name="Wedler H."/>
            <person name="Woelfl S."/>
            <person name="Harris D.E."/>
            <person name="Bowman S."/>
            <person name="Brown D."/>
            <person name="Churcher C.M."/>
            <person name="Connor R."/>
            <person name="Dedman K."/>
            <person name="Gentles S."/>
            <person name="Hamlin N."/>
            <person name="Hunt S."/>
            <person name="Jones L."/>
            <person name="McDonald S."/>
            <person name="Murphy L.D."/>
            <person name="Niblett D."/>
            <person name="Odell C."/>
            <person name="Oliver K."/>
            <person name="Rajandream M.A."/>
            <person name="Richards C."/>
            <person name="Shore L."/>
            <person name="Walsh S.V."/>
            <person name="Barrell B.G."/>
            <person name="Dietrich F.S."/>
            <person name="Mulligan J.T."/>
            <person name="Allen E."/>
            <person name="Araujo R."/>
            <person name="Aviles E."/>
            <person name="Berno A."/>
            <person name="Carpenter J."/>
            <person name="Chen E."/>
            <person name="Cherry J.M."/>
            <person name="Chung E."/>
            <person name="Duncan M."/>
            <person name="Hunicke-Smith S."/>
            <person name="Hyman R.W."/>
            <person name="Komp C."/>
            <person name="Lashkari D."/>
            <person name="Lew H."/>
            <person name="Lin D."/>
            <person name="Mosedale D."/>
            <person name="Nakahara K."/>
            <person name="Namath A."/>
            <person name="Oefner P."/>
            <person name="Oh C."/>
            <person name="Petel F.X."/>
            <person name="Roberts D."/>
            <person name="Schramm S."/>
            <person name="Schroeder M."/>
            <person name="Shogren T."/>
            <person name="Shroff N."/>
            <person name="Winant A."/>
            <person name="Yelton M.A."/>
            <person name="Botstein D."/>
            <person name="Davis R.W."/>
            <person name="Johnston M."/>
            <person name="Andrews S."/>
            <person name="Brinkman R."/>
            <person name="Cooper J."/>
            <person name="Ding H."/>
            <person name="Du Z."/>
            <person name="Favello A."/>
            <person name="Fulton L."/>
            <person name="Gattung S."/>
            <person name="Greco T."/>
            <person name="Hallsworth K."/>
            <person name="Hawkins J."/>
            <person name="Hillier L.W."/>
            <person name="Jier M."/>
            <person name="Johnson D."/>
            <person name="Johnston L."/>
            <person name="Kirsten J."/>
            <person name="Kucaba T."/>
            <person name="Langston Y."/>
            <person name="Latreille P."/>
            <person name="Le T."/>
            <person name="Mardis E."/>
            <person name="Menezes S."/>
            <person name="Miller N."/>
            <person name="Nhan M."/>
            <person name="Pauley A."/>
            <person name="Peluso D."/>
            <person name="Rifkin L."/>
            <person name="Riles L."/>
            <person name="Taich A."/>
            <person name="Trevaskis E."/>
            <person name="Vignati D."/>
            <person name="Wilcox L."/>
            <person name="Wohldman P."/>
            <person name="Vaudin M."/>
            <person name="Wilson R."/>
            <person name="Waterston R."/>
            <person name="Albermann K."/>
            <person name="Hani J."/>
            <person name="Heumann K."/>
            <person name="Kleine K."/>
            <person name="Mewes H.-W."/>
            <person name="Zollner A."/>
            <person name="Zaccaria P."/>
        </authorList>
    </citation>
    <scope>NUCLEOTIDE SEQUENCE [LARGE SCALE GENOMIC DNA]</scope>
    <source>
        <strain>ATCC 204508 / S288c</strain>
    </source>
</reference>
<reference key="3">
    <citation type="journal article" date="2014" name="G3 (Bethesda)">
        <title>The reference genome sequence of Saccharomyces cerevisiae: Then and now.</title>
        <authorList>
            <person name="Engel S.R."/>
            <person name="Dietrich F.S."/>
            <person name="Fisk D.G."/>
            <person name="Binkley G."/>
            <person name="Balakrishnan R."/>
            <person name="Costanzo M.C."/>
            <person name="Dwight S.S."/>
            <person name="Hitz B.C."/>
            <person name="Karra K."/>
            <person name="Nash R.S."/>
            <person name="Weng S."/>
            <person name="Wong E.D."/>
            <person name="Lloyd P."/>
            <person name="Skrzypek M.S."/>
            <person name="Miyasato S.R."/>
            <person name="Simison M."/>
            <person name="Cherry J.M."/>
        </authorList>
    </citation>
    <scope>GENOME REANNOTATION</scope>
    <source>
        <strain>ATCC 204508 / S288c</strain>
    </source>
</reference>
<reference key="4">
    <citation type="journal article" date="2007" name="Genome Res.">
        <title>Approaching a complete repository of sequence-verified protein-encoding clones for Saccharomyces cerevisiae.</title>
        <authorList>
            <person name="Hu Y."/>
            <person name="Rolfs A."/>
            <person name="Bhullar B."/>
            <person name="Murthy T.V.S."/>
            <person name="Zhu C."/>
            <person name="Berger M.F."/>
            <person name="Camargo A.A."/>
            <person name="Kelley F."/>
            <person name="McCarron S."/>
            <person name="Jepson D."/>
            <person name="Richardson A."/>
            <person name="Raphael J."/>
            <person name="Moreira D."/>
            <person name="Taycher E."/>
            <person name="Zuo D."/>
            <person name="Mohr S."/>
            <person name="Kane M.F."/>
            <person name="Williamson J."/>
            <person name="Simpson A.J.G."/>
            <person name="Bulyk M.L."/>
            <person name="Harlow E."/>
            <person name="Marsischky G."/>
            <person name="Kolodner R.D."/>
            <person name="LaBaer J."/>
        </authorList>
    </citation>
    <scope>NUCLEOTIDE SEQUENCE [GENOMIC DNA]</scope>
    <source>
        <strain>ATCC 204508 / S288c</strain>
    </source>
</reference>
<reference key="5">
    <citation type="journal article" date="2003" name="Nature">
        <title>Global analysis of protein expression in yeast.</title>
        <authorList>
            <person name="Ghaemmaghami S."/>
            <person name="Huh W.-K."/>
            <person name="Bower K."/>
            <person name="Howson R.W."/>
            <person name="Belle A."/>
            <person name="Dephoure N."/>
            <person name="O'Shea E.K."/>
            <person name="Weissman J.S."/>
        </authorList>
    </citation>
    <scope>LEVEL OF PROTEIN EXPRESSION [LARGE SCALE ANALYSIS]</scope>
</reference>
<reference key="6">
    <citation type="journal article" date="2007" name="J. Proteome Res.">
        <title>Large-scale phosphorylation analysis of alpha-factor-arrested Saccharomyces cerevisiae.</title>
        <authorList>
            <person name="Li X."/>
            <person name="Gerber S.A."/>
            <person name="Rudner A.D."/>
            <person name="Beausoleil S.A."/>
            <person name="Haas W."/>
            <person name="Villen J."/>
            <person name="Elias J.E."/>
            <person name="Gygi S.P."/>
        </authorList>
    </citation>
    <scope>IDENTIFICATION BY MASS SPECTROMETRY [LARGE SCALE ANALYSIS]</scope>
    <source>
        <strain>ADR376</strain>
    </source>
</reference>
<reference key="7">
    <citation type="journal article" date="2007" name="Proc. Natl. Acad. Sci. U.S.A.">
        <title>Analysis of phosphorylation sites on proteins from Saccharomyces cerevisiae by electron transfer dissociation (ETD) mass spectrometry.</title>
        <authorList>
            <person name="Chi A."/>
            <person name="Huttenhower C."/>
            <person name="Geer L.Y."/>
            <person name="Coon J.J."/>
            <person name="Syka J.E.P."/>
            <person name="Bai D.L."/>
            <person name="Shabanowitz J."/>
            <person name="Burke D.J."/>
            <person name="Troyanskaya O.G."/>
            <person name="Hunt D.F."/>
        </authorList>
    </citation>
    <scope>IDENTIFICATION BY MASS SPECTROMETRY [LARGE SCALE ANALYSIS]</scope>
</reference>
<reference key="8">
    <citation type="journal article" date="2008" name="Mol. Cell. Proteomics">
        <title>A multidimensional chromatography technology for in-depth phosphoproteome analysis.</title>
        <authorList>
            <person name="Albuquerque C.P."/>
            <person name="Smolka M.B."/>
            <person name="Payne S.H."/>
            <person name="Bafna V."/>
            <person name="Eng J."/>
            <person name="Zhou H."/>
        </authorList>
    </citation>
    <scope>IDENTIFICATION BY MASS SPECTROMETRY [LARGE SCALE ANALYSIS]</scope>
</reference>
<reference key="9">
    <citation type="journal article" date="2009" name="Science">
        <title>Global analysis of Cdk1 substrate phosphorylation sites provides insights into evolution.</title>
        <authorList>
            <person name="Holt L.J."/>
            <person name="Tuch B.B."/>
            <person name="Villen J."/>
            <person name="Johnson A.D."/>
            <person name="Gygi S.P."/>
            <person name="Morgan D.O."/>
        </authorList>
    </citation>
    <scope>PHOSPHORYLATION [LARGE SCALE ANALYSIS] AT THR-410</scope>
    <scope>IDENTIFICATION BY MASS SPECTROMETRY [LARGE SCALE ANALYSIS]</scope>
</reference>
<protein>
    <recommendedName>
        <fullName>Homocitrate synthase, mitochondrial</fullName>
        <shortName>HCS</shortName>
        <ecNumber evidence="1">2.3.3.14</ecNumber>
    </recommendedName>
</protein>
<feature type="transit peptide" description="Mitochondrion" evidence="3">
    <location>
        <begin position="1"/>
        <end status="unknown"/>
    </location>
</feature>
<feature type="chain" id="PRO_0000001051" description="Homocitrate synthase, mitochondrial">
    <location>
        <begin status="unknown"/>
        <end position="440"/>
    </location>
</feature>
<feature type="domain" description="Pyruvate carboxyltransferase" evidence="4">
    <location>
        <begin position="37"/>
        <end position="290"/>
    </location>
</feature>
<feature type="region of interest" description="Disordered" evidence="5">
    <location>
        <begin position="1"/>
        <end position="27"/>
    </location>
</feature>
<feature type="compositionally biased region" description="Polar residues" evidence="5">
    <location>
        <begin position="1"/>
        <end position="23"/>
    </location>
</feature>
<feature type="active site" description="Proton acceptor" evidence="1">
    <location>
        <position position="323"/>
    </location>
</feature>
<feature type="binding site" evidence="1">
    <location>
        <position position="45"/>
    </location>
    <ligand>
        <name>2-oxoglutarate</name>
        <dbReference type="ChEBI" id="CHEBI:16810"/>
    </ligand>
</feature>
<feature type="binding site" evidence="1">
    <location>
        <position position="46"/>
    </location>
    <ligand>
        <name>Mg(2+)</name>
        <dbReference type="ChEBI" id="CHEBI:18420"/>
    </ligand>
</feature>
<feature type="binding site" evidence="1">
    <location>
        <position position="105"/>
    </location>
    <ligand>
        <name>2-oxoglutarate</name>
        <dbReference type="ChEBI" id="CHEBI:16810"/>
    </ligand>
</feature>
<feature type="binding site" evidence="1">
    <location>
        <position position="165"/>
    </location>
    <ligand>
        <name>2-oxoglutarate</name>
        <dbReference type="ChEBI" id="CHEBI:16810"/>
    </ligand>
</feature>
<feature type="binding site" evidence="1">
    <location>
        <position position="199"/>
    </location>
    <ligand>
        <name>2-oxoglutarate</name>
        <dbReference type="ChEBI" id="CHEBI:16810"/>
    </ligand>
</feature>
<feature type="binding site" evidence="1">
    <location>
        <position position="226"/>
    </location>
    <ligand>
        <name>Mg(2+)</name>
        <dbReference type="ChEBI" id="CHEBI:18420"/>
    </ligand>
</feature>
<feature type="binding site" evidence="1">
    <location>
        <position position="228"/>
    </location>
    <ligand>
        <name>Mg(2+)</name>
        <dbReference type="ChEBI" id="CHEBI:18420"/>
    </ligand>
</feature>
<feature type="modified residue" description="Phosphoserine" evidence="2">
    <location>
        <position position="399"/>
    </location>
</feature>
<feature type="modified residue" description="Phosphothreonine" evidence="8">
    <location>
        <position position="410"/>
    </location>
</feature>
<feature type="sequence conflict" description="In Ref. 4; AAT92960." evidence="7" ref="4">
    <original>T</original>
    <variation>A</variation>
    <location>
        <position position="199"/>
    </location>
</feature>
<sequence length="440" mass="48594">MSENNEFQSVTESTTAPTTSNPYGPNPADYLSNVKNFQLIDSTLREGEQFANAFFDTEKKIEIARALDDFGVDYIELTSPVASEQSRKDCEAICKLGLKAKILTHIRCHMDDARVAVETGVDGVDVVIGTSKFLRQYSHGKDMNYIAKSAVEVIEFVKSKGIEIRFSSEDSFRSDLVDLLNIYKTVDKIGVNRVGIADTVGCANPRQVYELIRTLKSVVSCDIECHFHNDTGCAIANAYTALEGGARLIDVSVLGIGERNGITPLGGLMARMIVAAPDYVRSKYKLHKIRDIENLVADAVEVNIPFNNPITGFCAFTHKAGIHAKAILANPSTYEILDPHDFGMKRYIHFANRLTGWNAIKSRVDQLNLNLTDDQIKEVTAKIKKLGDVRPLNIDDVDSIIKDFHAELSTPLLKPVNKGTDDDNIDISNGHVSKKAKVTK</sequence>
<dbReference type="EC" id="2.3.3.14" evidence="1"/>
<dbReference type="EMBL" id="X96876">
    <property type="protein sequence ID" value="CAA65629.1"/>
    <property type="molecule type" value="Genomic_DNA"/>
</dbReference>
<dbReference type="EMBL" id="Z74179">
    <property type="protein sequence ID" value="CAA98700.1"/>
    <property type="molecule type" value="Genomic_DNA"/>
</dbReference>
<dbReference type="EMBL" id="AY692941">
    <property type="protein sequence ID" value="AAT92960.1"/>
    <property type="molecule type" value="Genomic_DNA"/>
</dbReference>
<dbReference type="EMBL" id="BK006938">
    <property type="protein sequence ID" value="DAA11728.1"/>
    <property type="molecule type" value="Genomic_DNA"/>
</dbReference>
<dbReference type="PIR" id="S67674">
    <property type="entry name" value="S67674"/>
</dbReference>
<dbReference type="RefSeq" id="NP_010151.1">
    <property type="nucleotide sequence ID" value="NM_001180190.1"/>
</dbReference>
<dbReference type="SMR" id="Q12122"/>
<dbReference type="BioGRID" id="31931">
    <property type="interactions" value="84"/>
</dbReference>
<dbReference type="DIP" id="DIP-4634N"/>
<dbReference type="FunCoup" id="Q12122">
    <property type="interactions" value="732"/>
</dbReference>
<dbReference type="IntAct" id="Q12122">
    <property type="interactions" value="19"/>
</dbReference>
<dbReference type="MINT" id="Q12122"/>
<dbReference type="STRING" id="4932.YDL131W"/>
<dbReference type="iPTMnet" id="Q12122"/>
<dbReference type="PaxDb" id="4932-YDL131W"/>
<dbReference type="PeptideAtlas" id="Q12122"/>
<dbReference type="EnsemblFungi" id="YDL131W_mRNA">
    <property type="protein sequence ID" value="YDL131W"/>
    <property type="gene ID" value="YDL131W"/>
</dbReference>
<dbReference type="GeneID" id="851425"/>
<dbReference type="KEGG" id="sce:YDL131W"/>
<dbReference type="AGR" id="SGD:S000002289"/>
<dbReference type="SGD" id="S000002289">
    <property type="gene designation" value="LYS21"/>
</dbReference>
<dbReference type="VEuPathDB" id="FungiDB:YDL131W"/>
<dbReference type="eggNOG" id="KOG2367">
    <property type="taxonomic scope" value="Eukaryota"/>
</dbReference>
<dbReference type="GeneTree" id="ENSGT00940000176819"/>
<dbReference type="HOGENOM" id="CLU_022158_2_2_1"/>
<dbReference type="InParanoid" id="Q12122"/>
<dbReference type="OMA" id="NTMRMLV"/>
<dbReference type="OrthoDB" id="2015253at2759"/>
<dbReference type="BioCyc" id="MetaCyc:YDL131W-MONOMER"/>
<dbReference type="BioCyc" id="YEAST:YDL131W-MONOMER"/>
<dbReference type="BRENDA" id="2.3.3.14">
    <property type="organism ID" value="984"/>
</dbReference>
<dbReference type="SABIO-RK" id="Q12122"/>
<dbReference type="UniPathway" id="UPA00033">
    <property type="reaction ID" value="UER00028"/>
</dbReference>
<dbReference type="BioGRID-ORCS" id="851425">
    <property type="hits" value="2 hits in 10 CRISPR screens"/>
</dbReference>
<dbReference type="PRO" id="PR:Q12122"/>
<dbReference type="Proteomes" id="UP000002311">
    <property type="component" value="Chromosome IV"/>
</dbReference>
<dbReference type="RNAct" id="Q12122">
    <property type="molecule type" value="protein"/>
</dbReference>
<dbReference type="GO" id="GO:0005739">
    <property type="term" value="C:mitochondrion"/>
    <property type="evidence" value="ECO:0007669"/>
    <property type="project" value="UniProtKB-SubCell"/>
</dbReference>
<dbReference type="GO" id="GO:0005634">
    <property type="term" value="C:nucleus"/>
    <property type="evidence" value="ECO:0000314"/>
    <property type="project" value="SGD"/>
</dbReference>
<dbReference type="GO" id="GO:0004410">
    <property type="term" value="F:homocitrate synthase activity"/>
    <property type="evidence" value="ECO:0000314"/>
    <property type="project" value="SGD"/>
</dbReference>
<dbReference type="GO" id="GO:0046872">
    <property type="term" value="F:metal ion binding"/>
    <property type="evidence" value="ECO:0007669"/>
    <property type="project" value="UniProtKB-KW"/>
</dbReference>
<dbReference type="GO" id="GO:0019878">
    <property type="term" value="P:lysine biosynthetic process via aminoadipic acid"/>
    <property type="evidence" value="ECO:0000315"/>
    <property type="project" value="SGD"/>
</dbReference>
<dbReference type="CDD" id="cd07948">
    <property type="entry name" value="DRE_TIM_HCS"/>
    <property type="match status" value="1"/>
</dbReference>
<dbReference type="FunFam" id="1.10.238.260:FF:000002">
    <property type="entry name" value="Homocitrate synthase, mitochondrial"/>
    <property type="match status" value="1"/>
</dbReference>
<dbReference type="FunFam" id="3.20.20.70:FF:000032">
    <property type="entry name" value="Homocitrate synthase, mitochondrial"/>
    <property type="match status" value="1"/>
</dbReference>
<dbReference type="Gene3D" id="1.10.238.260">
    <property type="match status" value="1"/>
</dbReference>
<dbReference type="Gene3D" id="3.20.20.70">
    <property type="entry name" value="Aldolase class I"/>
    <property type="match status" value="1"/>
</dbReference>
<dbReference type="HAMAP" id="MF_02222">
    <property type="entry name" value="Homocitr_synth_fung_arch"/>
    <property type="match status" value="1"/>
</dbReference>
<dbReference type="InterPro" id="IPR050073">
    <property type="entry name" value="2-IPM_HCS-like"/>
</dbReference>
<dbReference type="InterPro" id="IPR002034">
    <property type="entry name" value="AIPM/Hcit_synth_CS"/>
</dbReference>
<dbReference type="InterPro" id="IPR013785">
    <property type="entry name" value="Aldolase_TIM"/>
</dbReference>
<dbReference type="InterPro" id="IPR048253">
    <property type="entry name" value="DRE_TIM_HCS_fun_bact"/>
</dbReference>
<dbReference type="InterPro" id="IPR011872">
    <property type="entry name" value="Homocitrate_synth"/>
</dbReference>
<dbReference type="InterPro" id="IPR054691">
    <property type="entry name" value="LeuA/HCS_post-cat"/>
</dbReference>
<dbReference type="InterPro" id="IPR000891">
    <property type="entry name" value="PYR_CT"/>
</dbReference>
<dbReference type="NCBIfam" id="TIGR02146">
    <property type="entry name" value="LysS_fung_arch"/>
    <property type="match status" value="1"/>
</dbReference>
<dbReference type="PANTHER" id="PTHR10277:SF48">
    <property type="entry name" value="HOMOCITRATE SYNTHASE, CYTOSOLIC ISOZYME-RELATED"/>
    <property type="match status" value="1"/>
</dbReference>
<dbReference type="PANTHER" id="PTHR10277">
    <property type="entry name" value="HOMOCITRATE SYNTHASE-RELATED"/>
    <property type="match status" value="1"/>
</dbReference>
<dbReference type="Pfam" id="PF22617">
    <property type="entry name" value="HCS_D2"/>
    <property type="match status" value="1"/>
</dbReference>
<dbReference type="Pfam" id="PF00682">
    <property type="entry name" value="HMGL-like"/>
    <property type="match status" value="1"/>
</dbReference>
<dbReference type="SUPFAM" id="SSF51569">
    <property type="entry name" value="Aldolase"/>
    <property type="match status" value="1"/>
</dbReference>
<dbReference type="PROSITE" id="PS00815">
    <property type="entry name" value="AIPM_HOMOCIT_SYNTH_1"/>
    <property type="match status" value="1"/>
</dbReference>
<dbReference type="PROSITE" id="PS00816">
    <property type="entry name" value="AIPM_HOMOCIT_SYNTH_2"/>
    <property type="match status" value="1"/>
</dbReference>
<dbReference type="PROSITE" id="PS50991">
    <property type="entry name" value="PYR_CT"/>
    <property type="match status" value="1"/>
</dbReference>
<organism>
    <name type="scientific">Saccharomyces cerevisiae (strain ATCC 204508 / S288c)</name>
    <name type="common">Baker's yeast</name>
    <dbReference type="NCBI Taxonomy" id="559292"/>
    <lineage>
        <taxon>Eukaryota</taxon>
        <taxon>Fungi</taxon>
        <taxon>Dikarya</taxon>
        <taxon>Ascomycota</taxon>
        <taxon>Saccharomycotina</taxon>
        <taxon>Saccharomycetes</taxon>
        <taxon>Saccharomycetales</taxon>
        <taxon>Saccharomycetaceae</taxon>
        <taxon>Saccharomyces</taxon>
    </lineage>
</organism>
<accession>Q12122</accession>
<accession>D6VRL8</accession>
<accession>E9P8Z7</accession>
<comment type="function">
    <text evidence="1">Catalyzes the aldol-type condensation of 2-oxoglutarate with acetyl-CoA to yield homocitrate. Carries out the first step of the alpha-aminoadipate (AAA) lysine biosynthesis pathway.</text>
</comment>
<comment type="catalytic activity">
    <reaction evidence="1">
        <text>acetyl-CoA + 2-oxoglutarate + H2O = (2R)-homocitrate + CoA + H(+)</text>
        <dbReference type="Rhea" id="RHEA:12929"/>
        <dbReference type="ChEBI" id="CHEBI:15377"/>
        <dbReference type="ChEBI" id="CHEBI:15378"/>
        <dbReference type="ChEBI" id="CHEBI:16810"/>
        <dbReference type="ChEBI" id="CHEBI:57287"/>
        <dbReference type="ChEBI" id="CHEBI:57288"/>
        <dbReference type="ChEBI" id="CHEBI:58884"/>
        <dbReference type="EC" id="2.3.3.14"/>
    </reaction>
    <physiologicalReaction direction="left-to-right" evidence="1">
        <dbReference type="Rhea" id="RHEA:12930"/>
    </physiologicalReaction>
</comment>
<comment type="cofactor">
    <cofactor evidence="1">
        <name>Mg(2+)</name>
        <dbReference type="ChEBI" id="CHEBI:18420"/>
    </cofactor>
    <cofactor evidence="1">
        <name>Mn(2+)</name>
        <dbReference type="ChEBI" id="CHEBI:29035"/>
    </cofactor>
</comment>
<comment type="pathway">
    <text evidence="1">Amino-acid biosynthesis; L-lysine biosynthesis via AAA pathway; L-alpha-aminoadipate from 2-oxoglutarate: step 1/5.</text>
</comment>
<comment type="interaction">
    <interactant intactId="EBI-8508">
        <id>Q12122</id>
    </interactant>
    <interactant intactId="EBI-8502">
        <id>P48570</id>
        <label>LYS20</label>
    </interactant>
    <organismsDiffer>false</organismsDiffer>
    <experiments>3</experiments>
</comment>
<comment type="subcellular location">
    <subcellularLocation>
        <location evidence="7">Mitochondrion</location>
    </subcellularLocation>
</comment>
<comment type="miscellaneous">
    <text evidence="6">Present with 21900 molecules/cell in log phase SD medium.</text>
</comment>
<comment type="similarity">
    <text evidence="7">Belongs to the alpha-IPM synthase/homocitrate synthase family. Homocitrate synthase LYS20/LYS21 subfamily.</text>
</comment>
<evidence type="ECO:0000250" key="1">
    <source>
        <dbReference type="UniProtKB" id="O87198"/>
    </source>
</evidence>
<evidence type="ECO:0000250" key="2">
    <source>
        <dbReference type="UniProtKB" id="P48570"/>
    </source>
</evidence>
<evidence type="ECO:0000255" key="3"/>
<evidence type="ECO:0000255" key="4">
    <source>
        <dbReference type="PROSITE-ProRule" id="PRU01151"/>
    </source>
</evidence>
<evidence type="ECO:0000256" key="5">
    <source>
        <dbReference type="SAM" id="MobiDB-lite"/>
    </source>
</evidence>
<evidence type="ECO:0000269" key="6">
    <source>
    </source>
</evidence>
<evidence type="ECO:0000305" key="7"/>
<evidence type="ECO:0007744" key="8">
    <source>
    </source>
</evidence>
<name>HOSM_YEAST</name>